<name>PYRH_METKA</name>
<protein>
    <recommendedName>
        <fullName evidence="1">Uridylate kinase</fullName>
        <shortName evidence="1">UK</shortName>
        <ecNumber evidence="1">2.7.4.22</ecNumber>
    </recommendedName>
    <alternativeName>
        <fullName evidence="1">Uridine monophosphate kinase</fullName>
        <shortName evidence="1">UMP kinase</shortName>
        <shortName evidence="1">UMPK</shortName>
    </alternativeName>
</protein>
<accession>Q8TXB4</accession>
<dbReference type="EC" id="2.7.4.22" evidence="1"/>
<dbReference type="EMBL" id="AE009439">
    <property type="protein sequence ID" value="AAM01974.1"/>
    <property type="molecule type" value="Genomic_DNA"/>
</dbReference>
<dbReference type="RefSeq" id="WP_011019129.1">
    <property type="nucleotide sequence ID" value="NC_003551.1"/>
</dbReference>
<dbReference type="SMR" id="Q8TXB4"/>
<dbReference type="FunCoup" id="Q8TXB4">
    <property type="interactions" value="144"/>
</dbReference>
<dbReference type="STRING" id="190192.MK0760"/>
<dbReference type="PaxDb" id="190192-MK0760"/>
<dbReference type="EnsemblBacteria" id="AAM01974">
    <property type="protein sequence ID" value="AAM01974"/>
    <property type="gene ID" value="MK0760"/>
</dbReference>
<dbReference type="GeneID" id="1476861"/>
<dbReference type="KEGG" id="mka:MK0760"/>
<dbReference type="PATRIC" id="fig|190192.8.peg.800"/>
<dbReference type="HOGENOM" id="CLU_079546_0_0_2"/>
<dbReference type="InParanoid" id="Q8TXB4"/>
<dbReference type="OrthoDB" id="372251at2157"/>
<dbReference type="UniPathway" id="UPA00159">
    <property type="reaction ID" value="UER00275"/>
</dbReference>
<dbReference type="Proteomes" id="UP000001826">
    <property type="component" value="Chromosome"/>
</dbReference>
<dbReference type="GO" id="GO:0005737">
    <property type="term" value="C:cytoplasm"/>
    <property type="evidence" value="ECO:0007669"/>
    <property type="project" value="UniProtKB-SubCell"/>
</dbReference>
<dbReference type="GO" id="GO:0005524">
    <property type="term" value="F:ATP binding"/>
    <property type="evidence" value="ECO:0007669"/>
    <property type="project" value="UniProtKB-KW"/>
</dbReference>
<dbReference type="GO" id="GO:0033862">
    <property type="term" value="F:UMP kinase activity"/>
    <property type="evidence" value="ECO:0007669"/>
    <property type="project" value="UniProtKB-EC"/>
</dbReference>
<dbReference type="GO" id="GO:0044210">
    <property type="term" value="P:'de novo' CTP biosynthetic process"/>
    <property type="evidence" value="ECO:0007669"/>
    <property type="project" value="UniProtKB-UniRule"/>
</dbReference>
<dbReference type="GO" id="GO:0006225">
    <property type="term" value="P:UDP biosynthetic process"/>
    <property type="evidence" value="ECO:0007669"/>
    <property type="project" value="TreeGrafter"/>
</dbReference>
<dbReference type="Gene3D" id="3.40.1160.10">
    <property type="entry name" value="Acetylglutamate kinase-like"/>
    <property type="match status" value="1"/>
</dbReference>
<dbReference type="HAMAP" id="MF_01220_A">
    <property type="entry name" value="PyrH_A"/>
    <property type="match status" value="1"/>
</dbReference>
<dbReference type="InterPro" id="IPR036393">
    <property type="entry name" value="AceGlu_kinase-like_sf"/>
</dbReference>
<dbReference type="InterPro" id="IPR001048">
    <property type="entry name" value="Asp/Glu/Uridylate_kinase"/>
</dbReference>
<dbReference type="InterPro" id="IPR011817">
    <property type="entry name" value="Uridylate_kinase"/>
</dbReference>
<dbReference type="InterPro" id="IPR011818">
    <property type="entry name" value="Uridylate_kinase_arch/spir"/>
</dbReference>
<dbReference type="NCBIfam" id="TIGR02076">
    <property type="entry name" value="pyrH_arch"/>
    <property type="match status" value="1"/>
</dbReference>
<dbReference type="PANTHER" id="PTHR42833">
    <property type="entry name" value="URIDYLATE KINASE"/>
    <property type="match status" value="1"/>
</dbReference>
<dbReference type="PANTHER" id="PTHR42833:SF4">
    <property type="entry name" value="URIDYLATE KINASE PUMPKIN, CHLOROPLASTIC"/>
    <property type="match status" value="1"/>
</dbReference>
<dbReference type="Pfam" id="PF00696">
    <property type="entry name" value="AA_kinase"/>
    <property type="match status" value="1"/>
</dbReference>
<dbReference type="PIRSF" id="PIRSF005650">
    <property type="entry name" value="Uridylate_kin"/>
    <property type="match status" value="1"/>
</dbReference>
<dbReference type="SUPFAM" id="SSF53633">
    <property type="entry name" value="Carbamate kinase-like"/>
    <property type="match status" value="1"/>
</dbReference>
<sequence>MYSVVALGGSVVNVDKPERIKETAEILRNGLDSGLKICVVVGGGPTARRYINVARNLGTPETLLDEMGIAVTRLNAMLLGAALGLHDLHVPETPVEAARIVRRNGVAVCGGTHPGHTTDAVAAMIAELLEGPLVIVTNVDGVYDKDPSEPGARKLRELRPEELEELAVRAELKAGGSFVVDPLAAKMISRGQIVTHVVSWEDFRSRGLENVVRGRHNGTIIEG</sequence>
<evidence type="ECO:0000255" key="1">
    <source>
        <dbReference type="HAMAP-Rule" id="MF_01220"/>
    </source>
</evidence>
<reference key="1">
    <citation type="journal article" date="2002" name="Proc. Natl. Acad. Sci. U.S.A.">
        <title>The complete genome of hyperthermophile Methanopyrus kandleri AV19 and monophyly of archaeal methanogens.</title>
        <authorList>
            <person name="Slesarev A.I."/>
            <person name="Mezhevaya K.V."/>
            <person name="Makarova K.S."/>
            <person name="Polushin N.N."/>
            <person name="Shcherbinina O.V."/>
            <person name="Shakhova V.V."/>
            <person name="Belova G.I."/>
            <person name="Aravind L."/>
            <person name="Natale D.A."/>
            <person name="Rogozin I.B."/>
            <person name="Tatusov R.L."/>
            <person name="Wolf Y.I."/>
            <person name="Stetter K.O."/>
            <person name="Malykh A.G."/>
            <person name="Koonin E.V."/>
            <person name="Kozyavkin S.A."/>
        </authorList>
    </citation>
    <scope>NUCLEOTIDE SEQUENCE [LARGE SCALE GENOMIC DNA]</scope>
    <source>
        <strain>AV19 / DSM 6324 / JCM 9639 / NBRC 100938</strain>
    </source>
</reference>
<gene>
    <name evidence="1" type="primary">pyrH</name>
    <name type="ordered locus">MK0760</name>
</gene>
<feature type="chain" id="PRO_0000143918" description="Uridylate kinase">
    <location>
        <begin position="1"/>
        <end position="223"/>
    </location>
</feature>
<feature type="binding site" evidence="1">
    <location>
        <begin position="9"/>
        <end position="10"/>
    </location>
    <ligand>
        <name>ATP</name>
        <dbReference type="ChEBI" id="CHEBI:30616"/>
    </ligand>
</feature>
<feature type="binding site" evidence="1">
    <location>
        <position position="43"/>
    </location>
    <ligand>
        <name>UMP</name>
        <dbReference type="ChEBI" id="CHEBI:57865"/>
    </ligand>
</feature>
<feature type="binding site" evidence="1">
    <location>
        <position position="44"/>
    </location>
    <ligand>
        <name>ATP</name>
        <dbReference type="ChEBI" id="CHEBI:30616"/>
    </ligand>
</feature>
<feature type="binding site" evidence="1">
    <location>
        <position position="48"/>
    </location>
    <ligand>
        <name>ATP</name>
        <dbReference type="ChEBI" id="CHEBI:30616"/>
    </ligand>
</feature>
<feature type="binding site" evidence="1">
    <location>
        <position position="65"/>
    </location>
    <ligand>
        <name>UMP</name>
        <dbReference type="ChEBI" id="CHEBI:57865"/>
    </ligand>
</feature>
<feature type="binding site" evidence="1">
    <location>
        <begin position="112"/>
        <end position="118"/>
    </location>
    <ligand>
        <name>UMP</name>
        <dbReference type="ChEBI" id="CHEBI:57865"/>
    </ligand>
</feature>
<feature type="binding site" evidence="1">
    <location>
        <position position="137"/>
    </location>
    <ligand>
        <name>ATP</name>
        <dbReference type="ChEBI" id="CHEBI:30616"/>
    </ligand>
</feature>
<feature type="binding site" evidence="1">
    <location>
        <position position="138"/>
    </location>
    <ligand>
        <name>ATP</name>
        <dbReference type="ChEBI" id="CHEBI:30616"/>
    </ligand>
</feature>
<feature type="binding site" evidence="1">
    <location>
        <position position="143"/>
    </location>
    <ligand>
        <name>ATP</name>
        <dbReference type="ChEBI" id="CHEBI:30616"/>
    </ligand>
</feature>
<feature type="binding site" evidence="1">
    <location>
        <position position="146"/>
    </location>
    <ligand>
        <name>ATP</name>
        <dbReference type="ChEBI" id="CHEBI:30616"/>
    </ligand>
</feature>
<comment type="function">
    <text evidence="1">Catalyzes the reversible phosphorylation of UMP to UDP.</text>
</comment>
<comment type="catalytic activity">
    <reaction evidence="1">
        <text>UMP + ATP = UDP + ADP</text>
        <dbReference type="Rhea" id="RHEA:24400"/>
        <dbReference type="ChEBI" id="CHEBI:30616"/>
        <dbReference type="ChEBI" id="CHEBI:57865"/>
        <dbReference type="ChEBI" id="CHEBI:58223"/>
        <dbReference type="ChEBI" id="CHEBI:456216"/>
        <dbReference type="EC" id="2.7.4.22"/>
    </reaction>
</comment>
<comment type="activity regulation">
    <text evidence="1">Inhibited by UTP.</text>
</comment>
<comment type="pathway">
    <text evidence="1">Pyrimidine metabolism; CTP biosynthesis via de novo pathway; UDP from UMP (UMPK route): step 1/1.</text>
</comment>
<comment type="subunit">
    <text evidence="1">Homohexamer.</text>
</comment>
<comment type="subcellular location">
    <subcellularLocation>
        <location evidence="1">Cytoplasm</location>
    </subcellularLocation>
</comment>
<comment type="similarity">
    <text evidence="1">Belongs to the UMP kinase family.</text>
</comment>
<keyword id="KW-0067">ATP-binding</keyword>
<keyword id="KW-0963">Cytoplasm</keyword>
<keyword id="KW-0418">Kinase</keyword>
<keyword id="KW-0547">Nucleotide-binding</keyword>
<keyword id="KW-0665">Pyrimidine biosynthesis</keyword>
<keyword id="KW-1185">Reference proteome</keyword>
<keyword id="KW-0808">Transferase</keyword>
<proteinExistence type="inferred from homology"/>
<organism>
    <name type="scientific">Methanopyrus kandleri (strain AV19 / DSM 6324 / JCM 9639 / NBRC 100938)</name>
    <dbReference type="NCBI Taxonomy" id="190192"/>
    <lineage>
        <taxon>Archaea</taxon>
        <taxon>Methanobacteriati</taxon>
        <taxon>Methanobacteriota</taxon>
        <taxon>Methanomada group</taxon>
        <taxon>Methanopyri</taxon>
        <taxon>Methanopyrales</taxon>
        <taxon>Methanopyraceae</taxon>
        <taxon>Methanopyrus</taxon>
    </lineage>
</organism>